<sequence>MATTIQNNFRIRRNFGKINKIAEIPNLIAIQKFSYDKFLQADVPPEKRDDTGLQGVFKSVFPIKDFNETSSLEFVSYHLEKPKYDVDECHQRGMTYSAPIKVVVRLVVWDKDEETGAQSIRDVKEQEVYFGEIPLMTENGTFIINGTERVVVSQLHRSPGAFFDHDKGKSHSSGKLLYNARIIPYRGSWIDFEFDHKDILYVRIDRRRKLPATVLLRALGATPDTAKKDPVEFHGSAEEILKYYYDTETIRIEGKGKYEKDLVPDLLKGQRATRDIRDPKSNEVIVKKNRKYTESAIKKLVAAKMKSLPVEPEEVYTKISAEDVVDETTGEVLLEVNEEVTEAKVEELRKRNINEFKVLFIDNLNILPALRDTLMQDKISTPEEAIMEIYRRLRPGDPPTPETATNLFVNLFFNAERYDLSKVGRLKLNYKFGIEEPLENTVLTKRDILEVVRFLIDLKNGKPNKDVDDIDHLGNRRVRAVGELLENQYRIGLVRMERAIKERMSLQEIETLMPHDLINAKPVTAVIKEFFGSSQLSQFMDQTNPLSEVTHKRRLSALGPGGLTRERAGFEVRDVHSTHYGRICPIETPEGPNIGLIASLSTYARVNEYGFVETPYRKVEKGRVTDEVTFYSALEEEKHIIAQANAPVDKKGNFTEAKVWCRKEGEYIYVRPDEVDLMDVSPNQLVSVAASLVPFLENDDANRALMGSNMQRQAVPLLRTQAPLVGTGIEAIVARDSGVTTVAKRDGVVQSVDASRIVVKADVPTSATDVANEVDIYNLIKYQRSNQNTCINQKPIVKPGERVKKGDVIADGPATEMGELALGQNVVVAFMPWQGYNFEDSILLSERLIKEDVFTSVHIEEFECVARDTKLGKEEITRDIPNVGEEALKDLDESGIIRIGAEVKPGDILVGKITPKGETQLSPEEKLLRAIFGEKAGDVRDSSLRVPPGVSGTVINAKVFSRKGVEKDERAKAIEEMEEAKLLKDQNDEIKIIQDSAFQKIRRLLLGKEVTARLVDDKGEQLLKKGDVLDDALLDTVPQRYWGEIAVAGDVQDLARKIIENFEEQKELVKLLFGEKIGRLKKGDELPPGVIKMVKVYVAIKRKLAVGDKMAGRHGNKGVVSRVLPEEDLPYLEDGTPVDIVLNPLGVPSRMNVGQILETHLGWAARNVGLRLQEMIEKEWGADPLRKKLKAAFAGTEGGPVGERLAALIEDVPEKELPKLVQKLRRGMHVATPVFDGAREDEMKALMEEGSATLQSILFDGRTGEPFDQDVTVGVMYMLKLHHLVDEKIHARSIGPYSLVTQQPLGGKAQFGGQRLGEMEVWAMEAYGAAYSLQEFLTVKSDDVVGRTRMYEAIVKGENTLESGLPESFNVLIKELQSLALDVELLETPEAQAAREAAERDLGGGPLGAPRGAVASGEKSSA</sequence>
<name>RPOB_ANASK</name>
<dbReference type="EC" id="2.7.7.6" evidence="1"/>
<dbReference type="EMBL" id="CP001131">
    <property type="protein sequence ID" value="ACG73498.1"/>
    <property type="molecule type" value="Genomic_DNA"/>
</dbReference>
<dbReference type="RefSeq" id="WP_012526295.1">
    <property type="nucleotide sequence ID" value="NC_011145.1"/>
</dbReference>
<dbReference type="SMR" id="B4UDT2"/>
<dbReference type="KEGG" id="ank:AnaeK_2271"/>
<dbReference type="HOGENOM" id="CLU_000524_4_3_7"/>
<dbReference type="OrthoDB" id="9803954at2"/>
<dbReference type="Proteomes" id="UP000001871">
    <property type="component" value="Chromosome"/>
</dbReference>
<dbReference type="GO" id="GO:0000428">
    <property type="term" value="C:DNA-directed RNA polymerase complex"/>
    <property type="evidence" value="ECO:0007669"/>
    <property type="project" value="UniProtKB-KW"/>
</dbReference>
<dbReference type="GO" id="GO:0003677">
    <property type="term" value="F:DNA binding"/>
    <property type="evidence" value="ECO:0007669"/>
    <property type="project" value="UniProtKB-UniRule"/>
</dbReference>
<dbReference type="GO" id="GO:0003899">
    <property type="term" value="F:DNA-directed RNA polymerase activity"/>
    <property type="evidence" value="ECO:0007669"/>
    <property type="project" value="UniProtKB-UniRule"/>
</dbReference>
<dbReference type="GO" id="GO:0032549">
    <property type="term" value="F:ribonucleoside binding"/>
    <property type="evidence" value="ECO:0007669"/>
    <property type="project" value="InterPro"/>
</dbReference>
<dbReference type="GO" id="GO:0006351">
    <property type="term" value="P:DNA-templated transcription"/>
    <property type="evidence" value="ECO:0007669"/>
    <property type="project" value="UniProtKB-UniRule"/>
</dbReference>
<dbReference type="CDD" id="cd00653">
    <property type="entry name" value="RNA_pol_B_RPB2"/>
    <property type="match status" value="1"/>
</dbReference>
<dbReference type="FunFam" id="2.40.50.100:FF:000006">
    <property type="entry name" value="DNA-directed RNA polymerase subunit beta"/>
    <property type="match status" value="1"/>
</dbReference>
<dbReference type="FunFam" id="3.90.1800.10:FF:000001">
    <property type="entry name" value="DNA-directed RNA polymerase subunit beta"/>
    <property type="match status" value="1"/>
</dbReference>
<dbReference type="Gene3D" id="2.40.50.100">
    <property type="match status" value="1"/>
</dbReference>
<dbReference type="Gene3D" id="2.40.50.150">
    <property type="match status" value="1"/>
</dbReference>
<dbReference type="Gene3D" id="3.90.1100.10">
    <property type="match status" value="1"/>
</dbReference>
<dbReference type="Gene3D" id="2.30.150.10">
    <property type="entry name" value="DNA-directed RNA polymerase, beta subunit, external 1 domain"/>
    <property type="match status" value="1"/>
</dbReference>
<dbReference type="Gene3D" id="2.40.270.10">
    <property type="entry name" value="DNA-directed RNA polymerase, subunit 2, domain 6"/>
    <property type="match status" value="1"/>
</dbReference>
<dbReference type="Gene3D" id="3.90.1800.10">
    <property type="entry name" value="RNA polymerase alpha subunit dimerisation domain"/>
    <property type="match status" value="1"/>
</dbReference>
<dbReference type="Gene3D" id="3.90.1110.10">
    <property type="entry name" value="RNA polymerase Rpb2, domain 2"/>
    <property type="match status" value="1"/>
</dbReference>
<dbReference type="HAMAP" id="MF_01321">
    <property type="entry name" value="RNApol_bact_RpoB"/>
    <property type="match status" value="1"/>
</dbReference>
<dbReference type="InterPro" id="IPR042107">
    <property type="entry name" value="DNA-dir_RNA_pol_bsu_ext_1_sf"/>
</dbReference>
<dbReference type="InterPro" id="IPR019462">
    <property type="entry name" value="DNA-dir_RNA_pol_bsu_external_1"/>
</dbReference>
<dbReference type="InterPro" id="IPR015712">
    <property type="entry name" value="DNA-dir_RNA_pol_su2"/>
</dbReference>
<dbReference type="InterPro" id="IPR007120">
    <property type="entry name" value="DNA-dir_RNAP_su2_dom"/>
</dbReference>
<dbReference type="InterPro" id="IPR037033">
    <property type="entry name" value="DNA-dir_RNAP_su2_hyb_sf"/>
</dbReference>
<dbReference type="InterPro" id="IPR010243">
    <property type="entry name" value="RNA_pol_bsu_bac"/>
</dbReference>
<dbReference type="InterPro" id="IPR007121">
    <property type="entry name" value="RNA_pol_bsu_CS"/>
</dbReference>
<dbReference type="InterPro" id="IPR007644">
    <property type="entry name" value="RNA_pol_bsu_protrusion"/>
</dbReference>
<dbReference type="InterPro" id="IPR007642">
    <property type="entry name" value="RNA_pol_Rpb2_2"/>
</dbReference>
<dbReference type="InterPro" id="IPR037034">
    <property type="entry name" value="RNA_pol_Rpb2_2_sf"/>
</dbReference>
<dbReference type="InterPro" id="IPR007645">
    <property type="entry name" value="RNA_pol_Rpb2_3"/>
</dbReference>
<dbReference type="InterPro" id="IPR007641">
    <property type="entry name" value="RNA_pol_Rpb2_7"/>
</dbReference>
<dbReference type="InterPro" id="IPR014724">
    <property type="entry name" value="RNA_pol_RPB2_OB-fold"/>
</dbReference>
<dbReference type="NCBIfam" id="NF001616">
    <property type="entry name" value="PRK00405.1"/>
    <property type="match status" value="1"/>
</dbReference>
<dbReference type="NCBIfam" id="TIGR02013">
    <property type="entry name" value="rpoB"/>
    <property type="match status" value="1"/>
</dbReference>
<dbReference type="PANTHER" id="PTHR20856">
    <property type="entry name" value="DNA-DIRECTED RNA POLYMERASE I SUBUNIT 2"/>
    <property type="match status" value="1"/>
</dbReference>
<dbReference type="Pfam" id="PF04563">
    <property type="entry name" value="RNA_pol_Rpb2_1"/>
    <property type="match status" value="1"/>
</dbReference>
<dbReference type="Pfam" id="PF04561">
    <property type="entry name" value="RNA_pol_Rpb2_2"/>
    <property type="match status" value="2"/>
</dbReference>
<dbReference type="Pfam" id="PF04565">
    <property type="entry name" value="RNA_pol_Rpb2_3"/>
    <property type="match status" value="1"/>
</dbReference>
<dbReference type="Pfam" id="PF10385">
    <property type="entry name" value="RNA_pol_Rpb2_45"/>
    <property type="match status" value="1"/>
</dbReference>
<dbReference type="Pfam" id="PF00562">
    <property type="entry name" value="RNA_pol_Rpb2_6"/>
    <property type="match status" value="1"/>
</dbReference>
<dbReference type="Pfam" id="PF04560">
    <property type="entry name" value="RNA_pol_Rpb2_7"/>
    <property type="match status" value="1"/>
</dbReference>
<dbReference type="SUPFAM" id="SSF64484">
    <property type="entry name" value="beta and beta-prime subunits of DNA dependent RNA-polymerase"/>
    <property type="match status" value="1"/>
</dbReference>
<dbReference type="PROSITE" id="PS01166">
    <property type="entry name" value="RNA_POL_BETA"/>
    <property type="match status" value="1"/>
</dbReference>
<proteinExistence type="inferred from homology"/>
<keyword id="KW-0240">DNA-directed RNA polymerase</keyword>
<keyword id="KW-0548">Nucleotidyltransferase</keyword>
<keyword id="KW-0804">Transcription</keyword>
<keyword id="KW-0808">Transferase</keyword>
<feature type="chain" id="PRO_1000141656" description="DNA-directed RNA polymerase subunit beta">
    <location>
        <begin position="1"/>
        <end position="1422"/>
    </location>
</feature>
<feature type="region of interest" description="Disordered" evidence="2">
    <location>
        <begin position="1392"/>
        <end position="1422"/>
    </location>
</feature>
<organism>
    <name type="scientific">Anaeromyxobacter sp. (strain K)</name>
    <dbReference type="NCBI Taxonomy" id="447217"/>
    <lineage>
        <taxon>Bacteria</taxon>
        <taxon>Pseudomonadati</taxon>
        <taxon>Myxococcota</taxon>
        <taxon>Myxococcia</taxon>
        <taxon>Myxococcales</taxon>
        <taxon>Cystobacterineae</taxon>
        <taxon>Anaeromyxobacteraceae</taxon>
        <taxon>Anaeromyxobacter</taxon>
    </lineage>
</organism>
<reference key="1">
    <citation type="submission" date="2008-08" db="EMBL/GenBank/DDBJ databases">
        <title>Complete sequence of Anaeromyxobacter sp. K.</title>
        <authorList>
            <consortium name="US DOE Joint Genome Institute"/>
            <person name="Lucas S."/>
            <person name="Copeland A."/>
            <person name="Lapidus A."/>
            <person name="Glavina del Rio T."/>
            <person name="Dalin E."/>
            <person name="Tice H."/>
            <person name="Bruce D."/>
            <person name="Goodwin L."/>
            <person name="Pitluck S."/>
            <person name="Saunders E."/>
            <person name="Brettin T."/>
            <person name="Detter J.C."/>
            <person name="Han C."/>
            <person name="Larimer F."/>
            <person name="Land M."/>
            <person name="Hauser L."/>
            <person name="Kyrpides N."/>
            <person name="Ovchinnikiva G."/>
            <person name="Beliaev A."/>
        </authorList>
    </citation>
    <scope>NUCLEOTIDE SEQUENCE [LARGE SCALE GENOMIC DNA]</scope>
    <source>
        <strain>K</strain>
    </source>
</reference>
<evidence type="ECO:0000255" key="1">
    <source>
        <dbReference type="HAMAP-Rule" id="MF_01321"/>
    </source>
</evidence>
<evidence type="ECO:0000256" key="2">
    <source>
        <dbReference type="SAM" id="MobiDB-lite"/>
    </source>
</evidence>
<gene>
    <name evidence="1" type="primary">rpoB</name>
    <name type="ordered locus">AnaeK_2271</name>
</gene>
<accession>B4UDT2</accession>
<comment type="function">
    <text evidence="1">DNA-dependent RNA polymerase catalyzes the transcription of DNA into RNA using the four ribonucleoside triphosphates as substrates.</text>
</comment>
<comment type="catalytic activity">
    <reaction evidence="1">
        <text>RNA(n) + a ribonucleoside 5'-triphosphate = RNA(n+1) + diphosphate</text>
        <dbReference type="Rhea" id="RHEA:21248"/>
        <dbReference type="Rhea" id="RHEA-COMP:14527"/>
        <dbReference type="Rhea" id="RHEA-COMP:17342"/>
        <dbReference type="ChEBI" id="CHEBI:33019"/>
        <dbReference type="ChEBI" id="CHEBI:61557"/>
        <dbReference type="ChEBI" id="CHEBI:140395"/>
        <dbReference type="EC" id="2.7.7.6"/>
    </reaction>
</comment>
<comment type="subunit">
    <text evidence="1">The RNAP catalytic core consists of 2 alpha, 1 beta, 1 beta' and 1 omega subunit. When a sigma factor is associated with the core the holoenzyme is formed, which can initiate transcription.</text>
</comment>
<comment type="similarity">
    <text evidence="1">Belongs to the RNA polymerase beta chain family.</text>
</comment>
<protein>
    <recommendedName>
        <fullName evidence="1">DNA-directed RNA polymerase subunit beta</fullName>
        <shortName evidence="1">RNAP subunit beta</shortName>
        <ecNumber evidence="1">2.7.7.6</ecNumber>
    </recommendedName>
    <alternativeName>
        <fullName evidence="1">RNA polymerase subunit beta</fullName>
    </alternativeName>
    <alternativeName>
        <fullName evidence="1">Transcriptase subunit beta</fullName>
    </alternativeName>
</protein>